<evidence type="ECO:0000255" key="1">
    <source>
        <dbReference type="HAMAP-Rule" id="MF_01633"/>
    </source>
</evidence>
<accession>A5CWP9</accession>
<gene>
    <name evidence="1" type="primary">queC</name>
    <name type="ordered locus">COSY_0519</name>
</gene>
<protein>
    <recommendedName>
        <fullName evidence="1">7-cyano-7-deazaguanine synthase</fullName>
        <ecNumber evidence="1">6.3.4.20</ecNumber>
    </recommendedName>
    <alternativeName>
        <fullName evidence="1">7-cyano-7-carbaguanine synthase</fullName>
    </alternativeName>
    <alternativeName>
        <fullName evidence="1">PreQ(0) synthase</fullName>
    </alternativeName>
    <alternativeName>
        <fullName evidence="1">Queuosine biosynthesis protein QueC</fullName>
    </alternativeName>
</protein>
<comment type="function">
    <text evidence="1">Catalyzes the ATP-dependent conversion of 7-carboxy-7-deazaguanine (CDG) to 7-cyano-7-deazaguanine (preQ(0)).</text>
</comment>
<comment type="catalytic activity">
    <reaction evidence="1">
        <text>7-carboxy-7-deazaguanine + NH4(+) + ATP = 7-cyano-7-deazaguanine + ADP + phosphate + H2O + H(+)</text>
        <dbReference type="Rhea" id="RHEA:27982"/>
        <dbReference type="ChEBI" id="CHEBI:15377"/>
        <dbReference type="ChEBI" id="CHEBI:15378"/>
        <dbReference type="ChEBI" id="CHEBI:28938"/>
        <dbReference type="ChEBI" id="CHEBI:30616"/>
        <dbReference type="ChEBI" id="CHEBI:43474"/>
        <dbReference type="ChEBI" id="CHEBI:45075"/>
        <dbReference type="ChEBI" id="CHEBI:61036"/>
        <dbReference type="ChEBI" id="CHEBI:456216"/>
        <dbReference type="EC" id="6.3.4.20"/>
    </reaction>
</comment>
<comment type="cofactor">
    <cofactor evidence="1">
        <name>Zn(2+)</name>
        <dbReference type="ChEBI" id="CHEBI:29105"/>
    </cofactor>
    <text evidence="1">Binds 1 zinc ion per subunit.</text>
</comment>
<comment type="pathway">
    <text evidence="1">Purine metabolism; 7-cyano-7-deazaguanine biosynthesis.</text>
</comment>
<comment type="similarity">
    <text evidence="1">Belongs to the QueC family.</text>
</comment>
<sequence>MLNAKHKIKAVILLSGGLDSTTTLAIAKSKKFECYSLSFDYGQKQESELQSAKNIAKIFITSEHRVVKISLSGISKSALTNDNIDVPKFSQSNKIPITYVPARNTIFLSYALAWSEVLNCQHIFIGVNELDYSGYPDCRKSYIKAFEIMANLATKQGIEGQKLTIHTPLIHLNKAQIIKKGLSLGIDYTLTTTCYQADKNGKACGICDACEYRKLGFKEAKVPDQTRYQT</sequence>
<dbReference type="EC" id="6.3.4.20" evidence="1"/>
<dbReference type="EMBL" id="AP009247">
    <property type="protein sequence ID" value="BAF61638.1"/>
    <property type="molecule type" value="Genomic_DNA"/>
</dbReference>
<dbReference type="RefSeq" id="WP_011929908.1">
    <property type="nucleotide sequence ID" value="NC_009465.1"/>
</dbReference>
<dbReference type="SMR" id="A5CWP9"/>
<dbReference type="STRING" id="412965.COSY_0519"/>
<dbReference type="KEGG" id="vok:COSY_0519"/>
<dbReference type="eggNOG" id="COG0603">
    <property type="taxonomic scope" value="Bacteria"/>
</dbReference>
<dbReference type="HOGENOM" id="CLU_081854_1_1_6"/>
<dbReference type="OrthoDB" id="9789567at2"/>
<dbReference type="UniPathway" id="UPA00391"/>
<dbReference type="Proteomes" id="UP000000247">
    <property type="component" value="Chromosome"/>
</dbReference>
<dbReference type="GO" id="GO:0005524">
    <property type="term" value="F:ATP binding"/>
    <property type="evidence" value="ECO:0007669"/>
    <property type="project" value="UniProtKB-UniRule"/>
</dbReference>
<dbReference type="GO" id="GO:0016879">
    <property type="term" value="F:ligase activity, forming carbon-nitrogen bonds"/>
    <property type="evidence" value="ECO:0007669"/>
    <property type="project" value="UniProtKB-UniRule"/>
</dbReference>
<dbReference type="GO" id="GO:0008270">
    <property type="term" value="F:zinc ion binding"/>
    <property type="evidence" value="ECO:0007669"/>
    <property type="project" value="UniProtKB-UniRule"/>
</dbReference>
<dbReference type="GO" id="GO:0008616">
    <property type="term" value="P:queuosine biosynthetic process"/>
    <property type="evidence" value="ECO:0007669"/>
    <property type="project" value="UniProtKB-UniRule"/>
</dbReference>
<dbReference type="CDD" id="cd01995">
    <property type="entry name" value="QueC-like"/>
    <property type="match status" value="1"/>
</dbReference>
<dbReference type="Gene3D" id="3.40.50.620">
    <property type="entry name" value="HUPs"/>
    <property type="match status" value="1"/>
</dbReference>
<dbReference type="HAMAP" id="MF_01633">
    <property type="entry name" value="QueC"/>
    <property type="match status" value="1"/>
</dbReference>
<dbReference type="InterPro" id="IPR018317">
    <property type="entry name" value="QueC"/>
</dbReference>
<dbReference type="InterPro" id="IPR014729">
    <property type="entry name" value="Rossmann-like_a/b/a_fold"/>
</dbReference>
<dbReference type="NCBIfam" id="TIGR00364">
    <property type="entry name" value="7-cyano-7-deazaguanine synthase QueC"/>
    <property type="match status" value="1"/>
</dbReference>
<dbReference type="PANTHER" id="PTHR42914">
    <property type="entry name" value="7-CYANO-7-DEAZAGUANINE SYNTHASE"/>
    <property type="match status" value="1"/>
</dbReference>
<dbReference type="PANTHER" id="PTHR42914:SF1">
    <property type="entry name" value="7-CYANO-7-DEAZAGUANINE SYNTHASE"/>
    <property type="match status" value="1"/>
</dbReference>
<dbReference type="Pfam" id="PF06508">
    <property type="entry name" value="QueC"/>
    <property type="match status" value="1"/>
</dbReference>
<dbReference type="PIRSF" id="PIRSF006293">
    <property type="entry name" value="ExsB"/>
    <property type="match status" value="1"/>
</dbReference>
<dbReference type="SUPFAM" id="SSF52402">
    <property type="entry name" value="Adenine nucleotide alpha hydrolases-like"/>
    <property type="match status" value="1"/>
</dbReference>
<reference key="1">
    <citation type="journal article" date="2007" name="Curr. Biol.">
        <title>Reduced genome of the thioautotrophic intracellular symbiont in a deep-sea clam, Calyptogena okutanii.</title>
        <authorList>
            <person name="Kuwahara H."/>
            <person name="Yoshida T."/>
            <person name="Takaki Y."/>
            <person name="Shimamura S."/>
            <person name="Nishi S."/>
            <person name="Harada M."/>
            <person name="Matsuyama K."/>
            <person name="Takishita K."/>
            <person name="Kawato M."/>
            <person name="Uematsu K."/>
            <person name="Fujiwara Y."/>
            <person name="Sato T."/>
            <person name="Kato C."/>
            <person name="Kitagawa M."/>
            <person name="Kato I."/>
            <person name="Maruyama T."/>
        </authorList>
    </citation>
    <scope>NUCLEOTIDE SEQUENCE [LARGE SCALE GENOMIC DNA]</scope>
    <source>
        <strain>HA</strain>
    </source>
</reference>
<feature type="chain" id="PRO_0000336965" description="7-cyano-7-deazaguanine synthase">
    <location>
        <begin position="1"/>
        <end position="230"/>
    </location>
</feature>
<feature type="binding site" evidence="1">
    <location>
        <begin position="14"/>
        <end position="24"/>
    </location>
    <ligand>
        <name>ATP</name>
        <dbReference type="ChEBI" id="CHEBI:30616"/>
    </ligand>
</feature>
<feature type="binding site" evidence="1">
    <location>
        <position position="194"/>
    </location>
    <ligand>
        <name>Zn(2+)</name>
        <dbReference type="ChEBI" id="CHEBI:29105"/>
    </ligand>
</feature>
<feature type="binding site" evidence="1">
    <location>
        <position position="204"/>
    </location>
    <ligand>
        <name>Zn(2+)</name>
        <dbReference type="ChEBI" id="CHEBI:29105"/>
    </ligand>
</feature>
<feature type="binding site" evidence="1">
    <location>
        <position position="207"/>
    </location>
    <ligand>
        <name>Zn(2+)</name>
        <dbReference type="ChEBI" id="CHEBI:29105"/>
    </ligand>
</feature>
<feature type="binding site" evidence="1">
    <location>
        <position position="210"/>
    </location>
    <ligand>
        <name>Zn(2+)</name>
        <dbReference type="ChEBI" id="CHEBI:29105"/>
    </ligand>
</feature>
<proteinExistence type="inferred from homology"/>
<organism>
    <name type="scientific">Vesicomyosocius okutanii subsp. Calyptogena okutanii (strain HA)</name>
    <dbReference type="NCBI Taxonomy" id="412965"/>
    <lineage>
        <taxon>Bacteria</taxon>
        <taxon>Pseudomonadati</taxon>
        <taxon>Pseudomonadota</taxon>
        <taxon>Gammaproteobacteria</taxon>
        <taxon>Candidatus Pseudothioglobaceae</taxon>
        <taxon>Candidatus Vesicomyosocius</taxon>
    </lineage>
</organism>
<name>QUEC_VESOH</name>
<keyword id="KW-0067">ATP-binding</keyword>
<keyword id="KW-0436">Ligase</keyword>
<keyword id="KW-0479">Metal-binding</keyword>
<keyword id="KW-0547">Nucleotide-binding</keyword>
<keyword id="KW-0671">Queuosine biosynthesis</keyword>
<keyword id="KW-1185">Reference proteome</keyword>
<keyword id="KW-0862">Zinc</keyword>